<sequence>MLEIGKVERYIHEKLKKEKLHFVLLDPDDVSPETAGKIAEMSEAIGVDAIMVGGSTGAEGEVLDSVVRAIKESSSLPVILFPGSHGGISRYADAIFFMSLLNSRNPFFITGSQALGAFTVKRYGIEPIPMAYLIIEPGETVGWVGDAKPIPRHKPKIAAAYALAGQYLGMRLVYLEAGSGAPQPVPPEMIALVRKVIDVPLIVGGGIRTKEQARRAVEAGADIIVTGTAVEKAGSIEKARKKLEELNSGVKI</sequence>
<name>GGGPS_THEGJ</name>
<reference key="1">
    <citation type="journal article" date="2007" name="Genome Biol.">
        <title>Genome analysis and genome-wide proteomics of Thermococcus gammatolerans, the most radioresistant organism known amongst the Archaea.</title>
        <authorList>
            <person name="Zivanovic Y."/>
            <person name="Armengaud J."/>
            <person name="Lagorce A."/>
            <person name="Leplat C."/>
            <person name="Guerin P."/>
            <person name="Dutertre M."/>
            <person name="Anthouard V."/>
            <person name="Forterre P."/>
            <person name="Wincker P."/>
            <person name="Confalonieri F."/>
        </authorList>
    </citation>
    <scope>NUCLEOTIDE SEQUENCE [LARGE SCALE GENOMIC DNA]</scope>
    <source>
        <strain>DSM 15229 / JCM 11827 / EJ3</strain>
    </source>
</reference>
<proteinExistence type="inferred from homology"/>
<feature type="chain" id="PRO_1000202947" description="Geranylgeranylglyceryl phosphate synthase">
    <location>
        <begin position="1"/>
        <end position="252"/>
    </location>
</feature>
<feature type="binding site" evidence="1">
    <location>
        <position position="26"/>
    </location>
    <ligand>
        <name>Mg(2+)</name>
        <dbReference type="ChEBI" id="CHEBI:18420"/>
    </ligand>
</feature>
<feature type="binding site" evidence="1">
    <location>
        <position position="55"/>
    </location>
    <ligand>
        <name>Mg(2+)</name>
        <dbReference type="ChEBI" id="CHEBI:18420"/>
    </ligand>
</feature>
<feature type="binding site" evidence="1">
    <location>
        <begin position="174"/>
        <end position="180"/>
    </location>
    <ligand>
        <name>sn-glycerol 1-phosphate</name>
        <dbReference type="ChEBI" id="CHEBI:57685"/>
    </ligand>
</feature>
<feature type="binding site" evidence="1">
    <location>
        <begin position="205"/>
        <end position="206"/>
    </location>
    <ligand>
        <name>sn-glycerol 1-phosphate</name>
        <dbReference type="ChEBI" id="CHEBI:57685"/>
    </ligand>
</feature>
<feature type="binding site" evidence="1">
    <location>
        <begin position="227"/>
        <end position="228"/>
    </location>
    <ligand>
        <name>sn-glycerol 1-phosphate</name>
        <dbReference type="ChEBI" id="CHEBI:57685"/>
    </ligand>
</feature>
<dbReference type="EC" id="2.5.1.41" evidence="1"/>
<dbReference type="EMBL" id="CP001398">
    <property type="protein sequence ID" value="ACS33677.1"/>
    <property type="molecule type" value="Genomic_DNA"/>
</dbReference>
<dbReference type="RefSeq" id="WP_015858790.1">
    <property type="nucleotide sequence ID" value="NC_012804.1"/>
</dbReference>
<dbReference type="SMR" id="C5A615"/>
<dbReference type="STRING" id="593117.TGAM_1175"/>
<dbReference type="PaxDb" id="593117-TGAM_1175"/>
<dbReference type="GeneID" id="7988562"/>
<dbReference type="KEGG" id="tga:TGAM_1175"/>
<dbReference type="PATRIC" id="fig|593117.10.peg.1174"/>
<dbReference type="eggNOG" id="arCOG01085">
    <property type="taxonomic scope" value="Archaea"/>
</dbReference>
<dbReference type="HOGENOM" id="CLU_068610_0_0_2"/>
<dbReference type="OrthoDB" id="7409at2157"/>
<dbReference type="UniPathway" id="UPA00940"/>
<dbReference type="Proteomes" id="UP000001488">
    <property type="component" value="Chromosome"/>
</dbReference>
<dbReference type="GO" id="GO:0005737">
    <property type="term" value="C:cytoplasm"/>
    <property type="evidence" value="ECO:0007669"/>
    <property type="project" value="UniProtKB-SubCell"/>
</dbReference>
<dbReference type="GO" id="GO:0000107">
    <property type="term" value="F:imidazoleglycerol-phosphate synthase activity"/>
    <property type="evidence" value="ECO:0007669"/>
    <property type="project" value="TreeGrafter"/>
</dbReference>
<dbReference type="GO" id="GO:0000287">
    <property type="term" value="F:magnesium ion binding"/>
    <property type="evidence" value="ECO:0007669"/>
    <property type="project" value="UniProtKB-UniRule"/>
</dbReference>
<dbReference type="GO" id="GO:0047294">
    <property type="term" value="F:phosphoglycerol geranylgeranyltransferase activity"/>
    <property type="evidence" value="ECO:0007669"/>
    <property type="project" value="UniProtKB-UniRule"/>
</dbReference>
<dbReference type="GO" id="GO:0046474">
    <property type="term" value="P:glycerophospholipid biosynthetic process"/>
    <property type="evidence" value="ECO:0007669"/>
    <property type="project" value="UniProtKB-UniRule"/>
</dbReference>
<dbReference type="CDD" id="cd02812">
    <property type="entry name" value="PcrB_like"/>
    <property type="match status" value="1"/>
</dbReference>
<dbReference type="FunFam" id="3.20.20.390:FF:000001">
    <property type="entry name" value="Heptaprenylglyceryl phosphate synthase"/>
    <property type="match status" value="1"/>
</dbReference>
<dbReference type="Gene3D" id="3.20.20.390">
    <property type="entry name" value="FMN-linked oxidoreductases"/>
    <property type="match status" value="1"/>
</dbReference>
<dbReference type="HAMAP" id="MF_00112">
    <property type="entry name" value="GGGP_HepGP_synthase"/>
    <property type="match status" value="1"/>
</dbReference>
<dbReference type="InterPro" id="IPR038597">
    <property type="entry name" value="GGGP/HepGP_synthase_sf"/>
</dbReference>
<dbReference type="InterPro" id="IPR008205">
    <property type="entry name" value="GGGP_HepGP_synthase"/>
</dbReference>
<dbReference type="InterPro" id="IPR010946">
    <property type="entry name" value="GGGP_synth"/>
</dbReference>
<dbReference type="InterPro" id="IPR050064">
    <property type="entry name" value="IGPS_HisA/HisF"/>
</dbReference>
<dbReference type="NCBIfam" id="TIGR01769">
    <property type="entry name" value="GGGP"/>
    <property type="match status" value="1"/>
</dbReference>
<dbReference type="NCBIfam" id="TIGR01768">
    <property type="entry name" value="GGGP-family"/>
    <property type="match status" value="1"/>
</dbReference>
<dbReference type="NCBIfam" id="NF003198">
    <property type="entry name" value="PRK04169.1-2"/>
    <property type="match status" value="1"/>
</dbReference>
<dbReference type="PANTHER" id="PTHR21235:SF22">
    <property type="entry name" value="GERANYLGERANYLGLYCERYL PHOSPHATE SYNTHASE"/>
    <property type="match status" value="1"/>
</dbReference>
<dbReference type="PANTHER" id="PTHR21235">
    <property type="entry name" value="IMIDAZOLE GLYCEROL PHOSPHATE SYNTHASE SUBUNIT HISF/H IGP SYNTHASE SUBUNIT HISF/H"/>
    <property type="match status" value="1"/>
</dbReference>
<dbReference type="Pfam" id="PF01884">
    <property type="entry name" value="PcrB"/>
    <property type="match status" value="1"/>
</dbReference>
<dbReference type="SUPFAM" id="SSF51395">
    <property type="entry name" value="FMN-linked oxidoreductases"/>
    <property type="match status" value="1"/>
</dbReference>
<organism>
    <name type="scientific">Thermococcus gammatolerans (strain DSM 15229 / JCM 11827 / EJ3)</name>
    <dbReference type="NCBI Taxonomy" id="593117"/>
    <lineage>
        <taxon>Archaea</taxon>
        <taxon>Methanobacteriati</taxon>
        <taxon>Methanobacteriota</taxon>
        <taxon>Thermococci</taxon>
        <taxon>Thermococcales</taxon>
        <taxon>Thermococcaceae</taxon>
        <taxon>Thermococcus</taxon>
    </lineage>
</organism>
<accession>C5A615</accession>
<evidence type="ECO:0000255" key="1">
    <source>
        <dbReference type="HAMAP-Rule" id="MF_00112"/>
    </source>
</evidence>
<keyword id="KW-0963">Cytoplasm</keyword>
<keyword id="KW-0444">Lipid biosynthesis</keyword>
<keyword id="KW-0443">Lipid metabolism</keyword>
<keyword id="KW-0460">Magnesium</keyword>
<keyword id="KW-0479">Metal-binding</keyword>
<keyword id="KW-0594">Phospholipid biosynthesis</keyword>
<keyword id="KW-1208">Phospholipid metabolism</keyword>
<keyword id="KW-1185">Reference proteome</keyword>
<keyword id="KW-0808">Transferase</keyword>
<gene>
    <name type="ordered locus">TGAM_1175</name>
</gene>
<comment type="function">
    <text evidence="1">Prenyltransferase that catalyzes the transfer of the geranylgeranyl moiety of geranylgeranyl diphosphate (GGPP) to the C3 hydroxyl of sn-glycerol-1-phosphate (G1P). This reaction is the first ether-bond-formation step in the biosynthesis of archaeal membrane lipids.</text>
</comment>
<comment type="catalytic activity">
    <reaction evidence="1">
        <text>sn-glycerol 1-phosphate + (2E,6E,10E)-geranylgeranyl diphosphate = sn-3-O-(geranylgeranyl)glycerol 1-phosphate + diphosphate</text>
        <dbReference type="Rhea" id="RHEA:23404"/>
        <dbReference type="ChEBI" id="CHEBI:33019"/>
        <dbReference type="ChEBI" id="CHEBI:57677"/>
        <dbReference type="ChEBI" id="CHEBI:57685"/>
        <dbReference type="ChEBI" id="CHEBI:58756"/>
        <dbReference type="EC" id="2.5.1.41"/>
    </reaction>
</comment>
<comment type="cofactor">
    <cofactor evidence="1">
        <name>Mg(2+)</name>
        <dbReference type="ChEBI" id="CHEBI:18420"/>
    </cofactor>
</comment>
<comment type="pathway">
    <text evidence="1">Membrane lipid metabolism; glycerophospholipid metabolism.</text>
</comment>
<comment type="subcellular location">
    <subcellularLocation>
        <location evidence="1">Cytoplasm</location>
    </subcellularLocation>
</comment>
<comment type="similarity">
    <text evidence="1">Belongs to the GGGP/HepGP synthase family. Group II subfamily.</text>
</comment>
<protein>
    <recommendedName>
        <fullName evidence="1">Geranylgeranylglyceryl phosphate synthase</fullName>
        <shortName evidence="1">GGGP synthase</shortName>
        <shortName evidence="1">GGGPS</shortName>
        <ecNumber evidence="1">2.5.1.41</ecNumber>
    </recommendedName>
    <alternativeName>
        <fullName evidence="1">(S)-3-O-geranylgeranylglyceryl phosphate synthase</fullName>
    </alternativeName>
    <alternativeName>
        <fullName evidence="1">Phosphoglycerol geranylgeranyltransferase</fullName>
    </alternativeName>
</protein>